<sequence>MAGKAKFCAPEIQDNPDGWGPCSVPTAFKDIPYQPFSKADRLGKVSDWTGSVYQDRRYANKYQSQFGTGNQMFSYYHEEDETSFQLVDTSRTQRPGYMRNRNRFNQRGGYRRDNRGGRFQGQGGNMGMQNLSRGRDTRNKFQRKMQRNWGGGRHWSDKKTGGMHKRVASVTVREEWKVLEDGELDFPRLSKLNLPNVEEPETLYECGSVEYYDKAYDRVTTKNEVPLVGVNRVFHKVTTTDDPIISKLLSQGNVFATDAIISTLMTCTRSNYSWDIVVQRVGSKLFFDKRDDSEFDLLTVGETANDLNIDETSGINTPTNLSLEATFINQNFSQQVLKRGEVKTFDHPNPFVTDEDDSTVASVCYRYRKWDLGDGIQLIVRCEHDAIMQGPRGETCLVNIKTLNEWDPKMTGVDWRQKLDSQRGAVLATELKNNSCKLAKWTANSILAGSEYLKLGYVSRVNFLDTSKHTILGTQQFRPREFATQIALNMDNAWGVLRCIIDICMKQPEGKLLILKDPSKGVIRIYDIPNSTFETDEEDDDDDEDDVENDDGDDEKDEGDGED</sequence>
<gene>
    <name type="ORF">v1g235689</name>
</gene>
<reference key="1">
    <citation type="journal article" date="2007" name="Science">
        <title>Sea anemone genome reveals ancestral eumetazoan gene repertoire and genomic organization.</title>
        <authorList>
            <person name="Putnam N.H."/>
            <person name="Srivastava M."/>
            <person name="Hellsten U."/>
            <person name="Dirks B."/>
            <person name="Chapman J."/>
            <person name="Salamov A."/>
            <person name="Terry A."/>
            <person name="Shapiro H."/>
            <person name="Lindquist E."/>
            <person name="Kapitonov V.V."/>
            <person name="Jurka J."/>
            <person name="Genikhovich G."/>
            <person name="Grigoriev I.V."/>
            <person name="Lucas S.M."/>
            <person name="Steele R.E."/>
            <person name="Finnerty J.R."/>
            <person name="Technau U."/>
            <person name="Martindale M.Q."/>
            <person name="Rokhsar D.S."/>
        </authorList>
    </citation>
    <scope>NUCLEOTIDE SEQUENCE [LARGE SCALE GENOMIC DNA]</scope>
    <source>
        <strain>CH2 X CH6</strain>
    </source>
</reference>
<protein>
    <recommendedName>
        <fullName evidence="2">Eukaryotic translation initiation factor 3 subunit D</fullName>
        <shortName evidence="2">eIF3d</shortName>
    </recommendedName>
    <alternativeName>
        <fullName evidence="2">Eukaryotic translation initiation factor 3 subunit 7</fullName>
    </alternativeName>
</protein>
<comment type="function">
    <text evidence="2">mRNA cap-binding component of the eukaryotic translation initiation factor 3 (eIF-3) complex, which is involved in protein synthesis of a specialized repertoire of mRNAs and, together with other initiation factors, stimulates binding of mRNA and methionyl-tRNAi to the 40S ribosome. The eIF-3 complex specifically targets and initiates translation of a subset of mRNAs involved in cell proliferation. In the eIF-3 complex, eif3d specifically recognizes and binds the 7-methylguanosine cap of a subset of mRNAs.</text>
</comment>
<comment type="subunit">
    <text evidence="2">Component of the eukaryotic translation initiation factor 3 (eIF-3) complex.</text>
</comment>
<comment type="subcellular location">
    <subcellularLocation>
        <location evidence="2">Cytoplasm</location>
    </subcellularLocation>
</comment>
<comment type="domain">
    <text evidence="2">The RNA gate region regulates mRNA cap recognition to prevent promiscuous mRNA-binding before assembly of eif3d into the full eukaryotic translation initiation factor 3 (eIF-3) complex.</text>
</comment>
<comment type="similarity">
    <text evidence="2">Belongs to the eIF-3 subunit D family.</text>
</comment>
<dbReference type="EMBL" id="DS469711">
    <property type="protein sequence ID" value="EDO35013.1"/>
    <property type="molecule type" value="Genomic_DNA"/>
</dbReference>
<dbReference type="SMR" id="A7SMR1"/>
<dbReference type="FunCoup" id="A7SMR1">
    <property type="interactions" value="942"/>
</dbReference>
<dbReference type="STRING" id="45351.A7SMR1"/>
<dbReference type="EnsemblMetazoa" id="EDO35013">
    <property type="protein sequence ID" value="EDO35013"/>
    <property type="gene ID" value="NEMVEDRAFT_v1g235689"/>
</dbReference>
<dbReference type="KEGG" id="nve:5506418"/>
<dbReference type="eggNOG" id="KOG2479">
    <property type="taxonomic scope" value="Eukaryota"/>
</dbReference>
<dbReference type="HOGENOM" id="CLU_024521_2_0_1"/>
<dbReference type="InParanoid" id="A7SMR1"/>
<dbReference type="OMA" id="FMDKRDN"/>
<dbReference type="OrthoDB" id="16538at2759"/>
<dbReference type="PhylomeDB" id="A7SMR1"/>
<dbReference type="Proteomes" id="UP000001593">
    <property type="component" value="Unassembled WGS sequence"/>
</dbReference>
<dbReference type="GO" id="GO:0016282">
    <property type="term" value="C:eukaryotic 43S preinitiation complex"/>
    <property type="evidence" value="ECO:0007669"/>
    <property type="project" value="UniProtKB-UniRule"/>
</dbReference>
<dbReference type="GO" id="GO:0033290">
    <property type="term" value="C:eukaryotic 48S preinitiation complex"/>
    <property type="evidence" value="ECO:0007669"/>
    <property type="project" value="UniProtKB-UniRule"/>
</dbReference>
<dbReference type="GO" id="GO:0005852">
    <property type="term" value="C:eukaryotic translation initiation factor 3 complex"/>
    <property type="evidence" value="ECO:0000318"/>
    <property type="project" value="GO_Central"/>
</dbReference>
<dbReference type="GO" id="GO:0098808">
    <property type="term" value="F:mRNA cap binding"/>
    <property type="evidence" value="ECO:0007669"/>
    <property type="project" value="UniProtKB-UniRule"/>
</dbReference>
<dbReference type="GO" id="GO:0003743">
    <property type="term" value="F:translation initiation factor activity"/>
    <property type="evidence" value="ECO:0000318"/>
    <property type="project" value="GO_Central"/>
</dbReference>
<dbReference type="GO" id="GO:0002191">
    <property type="term" value="P:cap-dependent translational initiation"/>
    <property type="evidence" value="ECO:0007669"/>
    <property type="project" value="UniProtKB-UniRule"/>
</dbReference>
<dbReference type="GO" id="GO:0001732">
    <property type="term" value="P:formation of cytoplasmic translation initiation complex"/>
    <property type="evidence" value="ECO:0007669"/>
    <property type="project" value="UniProtKB-UniRule"/>
</dbReference>
<dbReference type="GO" id="GO:0006413">
    <property type="term" value="P:translational initiation"/>
    <property type="evidence" value="ECO:0000318"/>
    <property type="project" value="GO_Central"/>
</dbReference>
<dbReference type="HAMAP" id="MF_03003">
    <property type="entry name" value="eIF3d"/>
    <property type="match status" value="1"/>
</dbReference>
<dbReference type="InterPro" id="IPR007783">
    <property type="entry name" value="eIF3d"/>
</dbReference>
<dbReference type="PANTHER" id="PTHR12399">
    <property type="entry name" value="EUKARYOTIC TRANSLATION INITIATION FACTOR 3 SUBUNIT 7"/>
    <property type="match status" value="1"/>
</dbReference>
<dbReference type="PANTHER" id="PTHR12399:SF0">
    <property type="entry name" value="EUKARYOTIC TRANSLATION INITIATION FACTOR 3 SUBUNIT D"/>
    <property type="match status" value="1"/>
</dbReference>
<dbReference type="Pfam" id="PF05091">
    <property type="entry name" value="eIF-3_zeta"/>
    <property type="match status" value="1"/>
</dbReference>
<dbReference type="PIRSF" id="PIRSF016281">
    <property type="entry name" value="EIF-3_zeta"/>
    <property type="match status" value="1"/>
</dbReference>
<keyword id="KW-0963">Cytoplasm</keyword>
<keyword id="KW-0396">Initiation factor</keyword>
<keyword id="KW-0648">Protein biosynthesis</keyword>
<keyword id="KW-1185">Reference proteome</keyword>
<keyword id="KW-0694">RNA-binding</keyword>
<proteinExistence type="inferred from homology"/>
<name>EIF3D_NEMVE</name>
<accession>A7SMR1</accession>
<evidence type="ECO:0000250" key="1">
    <source>
        <dbReference type="UniProtKB" id="K7IM66"/>
    </source>
</evidence>
<evidence type="ECO:0000255" key="2">
    <source>
        <dbReference type="HAMAP-Rule" id="MF_03003"/>
    </source>
</evidence>
<evidence type="ECO:0000256" key="3">
    <source>
        <dbReference type="SAM" id="MobiDB-lite"/>
    </source>
</evidence>
<organism>
    <name type="scientific">Nematostella vectensis</name>
    <name type="common">Starlet sea anemone</name>
    <dbReference type="NCBI Taxonomy" id="45351"/>
    <lineage>
        <taxon>Eukaryota</taxon>
        <taxon>Metazoa</taxon>
        <taxon>Cnidaria</taxon>
        <taxon>Anthozoa</taxon>
        <taxon>Hexacorallia</taxon>
        <taxon>Actiniaria</taxon>
        <taxon>Edwardsiidae</taxon>
        <taxon>Nematostella</taxon>
    </lineage>
</organism>
<feature type="chain" id="PRO_0000364166" description="Eukaryotic translation initiation factor 3 subunit D">
    <location>
        <begin position="1"/>
        <end position="563"/>
    </location>
</feature>
<feature type="region of interest" description="Disordered" evidence="3">
    <location>
        <begin position="95"/>
        <end position="136"/>
    </location>
</feature>
<feature type="region of interest" description="RNA gate" evidence="1">
    <location>
        <begin position="294"/>
        <end position="308"/>
    </location>
</feature>
<feature type="region of interest" description="Disordered" evidence="3">
    <location>
        <begin position="528"/>
        <end position="563"/>
    </location>
</feature>
<feature type="compositionally biased region" description="Acidic residues" evidence="3">
    <location>
        <begin position="534"/>
        <end position="563"/>
    </location>
</feature>